<reference key="1">
    <citation type="journal article" date="2000" name="Nature">
        <title>Sequence and analysis of chromosome 1 of the plant Arabidopsis thaliana.</title>
        <authorList>
            <person name="Theologis A."/>
            <person name="Ecker J.R."/>
            <person name="Palm C.J."/>
            <person name="Federspiel N.A."/>
            <person name="Kaul S."/>
            <person name="White O."/>
            <person name="Alonso J."/>
            <person name="Altafi H."/>
            <person name="Araujo R."/>
            <person name="Bowman C.L."/>
            <person name="Brooks S.Y."/>
            <person name="Buehler E."/>
            <person name="Chan A."/>
            <person name="Chao Q."/>
            <person name="Chen H."/>
            <person name="Cheuk R.F."/>
            <person name="Chin C.W."/>
            <person name="Chung M.K."/>
            <person name="Conn L."/>
            <person name="Conway A.B."/>
            <person name="Conway A.R."/>
            <person name="Creasy T.H."/>
            <person name="Dewar K."/>
            <person name="Dunn P."/>
            <person name="Etgu P."/>
            <person name="Feldblyum T.V."/>
            <person name="Feng J.-D."/>
            <person name="Fong B."/>
            <person name="Fujii C.Y."/>
            <person name="Gill J.E."/>
            <person name="Goldsmith A.D."/>
            <person name="Haas B."/>
            <person name="Hansen N.F."/>
            <person name="Hughes B."/>
            <person name="Huizar L."/>
            <person name="Hunter J.L."/>
            <person name="Jenkins J."/>
            <person name="Johnson-Hopson C."/>
            <person name="Khan S."/>
            <person name="Khaykin E."/>
            <person name="Kim C.J."/>
            <person name="Koo H.L."/>
            <person name="Kremenetskaia I."/>
            <person name="Kurtz D.B."/>
            <person name="Kwan A."/>
            <person name="Lam B."/>
            <person name="Langin-Hooper S."/>
            <person name="Lee A."/>
            <person name="Lee J.M."/>
            <person name="Lenz C.A."/>
            <person name="Li J.H."/>
            <person name="Li Y.-P."/>
            <person name="Lin X."/>
            <person name="Liu S.X."/>
            <person name="Liu Z.A."/>
            <person name="Luros J.S."/>
            <person name="Maiti R."/>
            <person name="Marziali A."/>
            <person name="Militscher J."/>
            <person name="Miranda M."/>
            <person name="Nguyen M."/>
            <person name="Nierman W.C."/>
            <person name="Osborne B.I."/>
            <person name="Pai G."/>
            <person name="Peterson J."/>
            <person name="Pham P.K."/>
            <person name="Rizzo M."/>
            <person name="Rooney T."/>
            <person name="Rowley D."/>
            <person name="Sakano H."/>
            <person name="Salzberg S.L."/>
            <person name="Schwartz J.R."/>
            <person name="Shinn P."/>
            <person name="Southwick A.M."/>
            <person name="Sun H."/>
            <person name="Tallon L.J."/>
            <person name="Tambunga G."/>
            <person name="Toriumi M.J."/>
            <person name="Town C.D."/>
            <person name="Utterback T."/>
            <person name="Van Aken S."/>
            <person name="Vaysberg M."/>
            <person name="Vysotskaia V.S."/>
            <person name="Walker M."/>
            <person name="Wu D."/>
            <person name="Yu G."/>
            <person name="Fraser C.M."/>
            <person name="Venter J.C."/>
            <person name="Davis R.W."/>
        </authorList>
    </citation>
    <scope>NUCLEOTIDE SEQUENCE [LARGE SCALE GENOMIC DNA]</scope>
    <source>
        <strain>cv. Columbia</strain>
    </source>
</reference>
<reference key="2">
    <citation type="journal article" date="2017" name="Plant J.">
        <title>Araport11: a complete reannotation of the Arabidopsis thaliana reference genome.</title>
        <authorList>
            <person name="Cheng C.Y."/>
            <person name="Krishnakumar V."/>
            <person name="Chan A.P."/>
            <person name="Thibaud-Nissen F."/>
            <person name="Schobel S."/>
            <person name="Town C.D."/>
        </authorList>
    </citation>
    <scope>GENOME REANNOTATION</scope>
    <source>
        <strain>cv. Columbia</strain>
    </source>
</reference>
<comment type="function">
    <text evidence="1">Long-chain fatty alcohol oxidase involved in the omega-oxidation pathway of lipid degradation.</text>
</comment>
<comment type="catalytic activity">
    <reaction>
        <text>a long-chain primary fatty alcohol + O2 = a long-chain fatty aldehyde + H2O2</text>
        <dbReference type="Rhea" id="RHEA:22756"/>
        <dbReference type="ChEBI" id="CHEBI:15379"/>
        <dbReference type="ChEBI" id="CHEBI:16240"/>
        <dbReference type="ChEBI" id="CHEBI:17176"/>
        <dbReference type="ChEBI" id="CHEBI:77396"/>
        <dbReference type="EC" id="1.1.3.20"/>
    </reaction>
</comment>
<comment type="subcellular location">
    <subcellularLocation>
        <location evidence="4">Membrane</location>
        <topology evidence="4">Multi-pass membrane protein</topology>
    </subcellularLocation>
</comment>
<comment type="similarity">
    <text evidence="4">Belongs to the GMC oxidoreductase family.</text>
</comment>
<comment type="sequence caution" evidence="4">
    <conflict type="erroneous gene model prediction">
        <sequence resource="EMBL-CDS" id="AAD10696"/>
    </conflict>
</comment>
<proteinExistence type="inferred from homology"/>
<dbReference type="EC" id="1.1.3.20"/>
<dbReference type="EMBL" id="AC003027">
    <property type="protein sequence ID" value="AAD10696.1"/>
    <property type="status" value="ALT_SEQ"/>
    <property type="molecule type" value="Genomic_DNA"/>
</dbReference>
<dbReference type="EMBL" id="CP002684">
    <property type="protein sequence ID" value="AEE27643.1"/>
    <property type="molecule type" value="Genomic_DNA"/>
</dbReference>
<dbReference type="PIR" id="A86171">
    <property type="entry name" value="A86171"/>
</dbReference>
<dbReference type="RefSeq" id="NP_171895.2">
    <property type="nucleotide sequence ID" value="NM_100280.3"/>
</dbReference>
<dbReference type="SMR" id="Q9ZWB9"/>
<dbReference type="FunCoup" id="Q9ZWB9">
    <property type="interactions" value="3"/>
</dbReference>
<dbReference type="STRING" id="3702.Q9ZWB9"/>
<dbReference type="PaxDb" id="3702-AT1G03990.1"/>
<dbReference type="ProteomicsDB" id="230849"/>
<dbReference type="EnsemblPlants" id="AT1G03990.1">
    <property type="protein sequence ID" value="AT1G03990.1"/>
    <property type="gene ID" value="AT1G03990"/>
</dbReference>
<dbReference type="GeneID" id="839342"/>
<dbReference type="Gramene" id="AT1G03990.1">
    <property type="protein sequence ID" value="AT1G03990.1"/>
    <property type="gene ID" value="AT1G03990"/>
</dbReference>
<dbReference type="KEGG" id="ath:AT1G03990"/>
<dbReference type="Araport" id="AT1G03990"/>
<dbReference type="TAIR" id="AT1G03990"/>
<dbReference type="eggNOG" id="ENOG502QSD8">
    <property type="taxonomic scope" value="Eukaryota"/>
</dbReference>
<dbReference type="HOGENOM" id="CLU_008878_1_1_1"/>
<dbReference type="InParanoid" id="Q9ZWB9"/>
<dbReference type="OMA" id="SMSKHWT"/>
<dbReference type="OrthoDB" id="269227at2759"/>
<dbReference type="BioCyc" id="ARA:AT1G03990-MONOMER"/>
<dbReference type="PRO" id="PR:Q9ZWB9"/>
<dbReference type="Proteomes" id="UP000006548">
    <property type="component" value="Chromosome 1"/>
</dbReference>
<dbReference type="ExpressionAtlas" id="Q9ZWB9">
    <property type="expression patterns" value="baseline and differential"/>
</dbReference>
<dbReference type="GO" id="GO:0016020">
    <property type="term" value="C:membrane"/>
    <property type="evidence" value="ECO:0007669"/>
    <property type="project" value="UniProtKB-SubCell"/>
</dbReference>
<dbReference type="GO" id="GO:0050660">
    <property type="term" value="F:flavin adenine dinucleotide binding"/>
    <property type="evidence" value="ECO:0007669"/>
    <property type="project" value="InterPro"/>
</dbReference>
<dbReference type="GO" id="GO:0046577">
    <property type="term" value="F:long-chain-alcohol oxidase activity"/>
    <property type="evidence" value="ECO:0007669"/>
    <property type="project" value="UniProtKB-EC"/>
</dbReference>
<dbReference type="Gene3D" id="3.50.50.60">
    <property type="entry name" value="FAD/NAD(P)-binding domain"/>
    <property type="match status" value="2"/>
</dbReference>
<dbReference type="InterPro" id="IPR036188">
    <property type="entry name" value="FAD/NAD-bd_sf"/>
</dbReference>
<dbReference type="InterPro" id="IPR000172">
    <property type="entry name" value="GMC_OxRdtase_N"/>
</dbReference>
<dbReference type="InterPro" id="IPR007867">
    <property type="entry name" value="GMC_OxRtase_C"/>
</dbReference>
<dbReference type="InterPro" id="IPR012400">
    <property type="entry name" value="Long_Oxdase"/>
</dbReference>
<dbReference type="PANTHER" id="PTHR46056">
    <property type="entry name" value="LONG-CHAIN-ALCOHOL OXIDASE"/>
    <property type="match status" value="1"/>
</dbReference>
<dbReference type="PANTHER" id="PTHR46056:SF5">
    <property type="entry name" value="LONG-CHAIN-ALCOHOL OXIDASE FAO1"/>
    <property type="match status" value="1"/>
</dbReference>
<dbReference type="Pfam" id="PF05199">
    <property type="entry name" value="GMC_oxred_C"/>
    <property type="match status" value="1"/>
</dbReference>
<dbReference type="Pfam" id="PF00732">
    <property type="entry name" value="GMC_oxred_N"/>
    <property type="match status" value="1"/>
</dbReference>
<dbReference type="Pfam" id="PF13450">
    <property type="entry name" value="NAD_binding_8"/>
    <property type="match status" value="1"/>
</dbReference>
<dbReference type="PIRSF" id="PIRSF028937">
    <property type="entry name" value="Lg_Ch_AO"/>
    <property type="match status" value="1"/>
</dbReference>
<dbReference type="SUPFAM" id="SSF51905">
    <property type="entry name" value="FAD/NAD(P)-binding domain"/>
    <property type="match status" value="1"/>
</dbReference>
<feature type="chain" id="PRO_0000395503" description="Long-chain-alcohol oxidase FAO1">
    <location>
        <begin position="1"/>
        <end position="758"/>
    </location>
</feature>
<feature type="transmembrane region" description="Helical" evidence="3">
    <location>
        <begin position="102"/>
        <end position="122"/>
    </location>
</feature>
<feature type="transmembrane region" description="Helical" evidence="3">
    <location>
        <begin position="155"/>
        <end position="175"/>
    </location>
</feature>
<feature type="active site" description="Proton acceptor" evidence="2">
    <location>
        <position position="689"/>
    </location>
</feature>
<feature type="binding site" evidence="3">
    <location>
        <begin position="246"/>
        <end position="261"/>
    </location>
    <ligand>
        <name>FAD</name>
        <dbReference type="ChEBI" id="CHEBI:57692"/>
    </ligand>
</feature>
<keyword id="KW-0274">FAD</keyword>
<keyword id="KW-0285">Flavoprotein</keyword>
<keyword id="KW-0472">Membrane</keyword>
<keyword id="KW-0560">Oxidoreductase</keyword>
<keyword id="KW-1185">Reference proteome</keyword>
<keyword id="KW-0812">Transmembrane</keyword>
<keyword id="KW-1133">Transmembrane helix</keyword>
<evidence type="ECO:0000250" key="1"/>
<evidence type="ECO:0000250" key="2">
    <source>
        <dbReference type="UniProtKB" id="E4QP00"/>
    </source>
</evidence>
<evidence type="ECO:0000255" key="3"/>
<evidence type="ECO:0000305" key="4"/>
<sequence>MVGGRRLGKRGSPLLRWSVKQESFSHGFSKSDLQALSSICDAIMPPVPLESLNLEMKLKVLRNDALLSFFKSSSSESHVRPDEVAELLATKAIPLTVLVVRIVLRILTFRLGTLLLCGLVCLDKKHWPFLLKFSEMSLEKREKVLQRWNTQWYNPLARIGFMMIKAIFLFYYFTWTNENSENPVWDAINYSVEIGENEDMEQKERPLDEGIIETAKEDEMTIKQRMINKGLKVTEDRERDTYKIECDAVVVGSGCGGGVAAAILAKSGLRVVVIEKGNYFAPRDYSALEGPSMFELFESNSLMMTHDGRFRFMAGSTVGGGSVVNWAASLKTPDAIIEEWSVHRGISIYSSEKYKAAMGIVCKRLGVTEKIIREGFQNQILRKGCEKLGLDVTIVPRNSTEKHYCGSCSYGCPTGEKRGTDSTWLVDAVNNNAVILTQCKAEKLILADNDANKREESGRRKRCLGVAASLSHQTRKKLQINAKVTIVACGSLKTPGLLASSGLKNSNISRGLHIHPIMMAWGYFPEKNSELEGAAHEGEIVTSLHYVHPMDSTTPNITLETPAIGPGTFAALTPWVSGSDMKERMAKYARTAHIFAMVRDEGVGEVKGDIVKYRLTKADEENLTIGLKQALRILVAAGAAEVGTYRSDGQRMKCDGIKQKDLEAFLDTVNAPPGVVSMSKHWTQSFTAHQIGCCRMGATEKEGAIDGKGESWEAEDLYVCDASVLPTALGVNPMITVQSTAYCISNRIAELMKKRKKD</sequence>
<name>FAO1_ARATH</name>
<gene>
    <name type="primary">FAO1</name>
    <name type="ordered locus">At1g03990</name>
    <name type="ORF">F21M11.7</name>
</gene>
<protein>
    <recommendedName>
        <fullName>Long-chain-alcohol oxidase FAO1</fullName>
        <ecNumber>1.1.3.20</ecNumber>
    </recommendedName>
    <alternativeName>
        <fullName>Long-chain fatty alcohol oxidase 1</fullName>
    </alternativeName>
</protein>
<organism>
    <name type="scientific">Arabidopsis thaliana</name>
    <name type="common">Mouse-ear cress</name>
    <dbReference type="NCBI Taxonomy" id="3702"/>
    <lineage>
        <taxon>Eukaryota</taxon>
        <taxon>Viridiplantae</taxon>
        <taxon>Streptophyta</taxon>
        <taxon>Embryophyta</taxon>
        <taxon>Tracheophyta</taxon>
        <taxon>Spermatophyta</taxon>
        <taxon>Magnoliopsida</taxon>
        <taxon>eudicotyledons</taxon>
        <taxon>Gunneridae</taxon>
        <taxon>Pentapetalae</taxon>
        <taxon>rosids</taxon>
        <taxon>malvids</taxon>
        <taxon>Brassicales</taxon>
        <taxon>Brassicaceae</taxon>
        <taxon>Camelineae</taxon>
        <taxon>Arabidopsis</taxon>
    </lineage>
</organism>
<accession>Q9ZWB9</accession>
<accession>F4I439</accession>